<comment type="function">
    <text evidence="1">Succinyl-CoA synthetase functions in the citric acid cycle (TCA), coupling the hydrolysis of succinyl-CoA to the synthesis of either ATP or GTP and thus represents the only step of substrate-level phosphorylation in the TCA. The beta subunit provides nucleotide specificity of the enzyme and binds the substrate succinate, while the binding sites for coenzyme A and phosphate are found in the alpha subunit.</text>
</comment>
<comment type="catalytic activity">
    <reaction evidence="1">
        <text>succinate + ATP + CoA = succinyl-CoA + ADP + phosphate</text>
        <dbReference type="Rhea" id="RHEA:17661"/>
        <dbReference type="ChEBI" id="CHEBI:30031"/>
        <dbReference type="ChEBI" id="CHEBI:30616"/>
        <dbReference type="ChEBI" id="CHEBI:43474"/>
        <dbReference type="ChEBI" id="CHEBI:57287"/>
        <dbReference type="ChEBI" id="CHEBI:57292"/>
        <dbReference type="ChEBI" id="CHEBI:456216"/>
        <dbReference type="EC" id="6.2.1.5"/>
    </reaction>
    <physiologicalReaction direction="right-to-left" evidence="1">
        <dbReference type="Rhea" id="RHEA:17663"/>
    </physiologicalReaction>
</comment>
<comment type="catalytic activity">
    <reaction evidence="1">
        <text>GTP + succinate + CoA = succinyl-CoA + GDP + phosphate</text>
        <dbReference type="Rhea" id="RHEA:22120"/>
        <dbReference type="ChEBI" id="CHEBI:30031"/>
        <dbReference type="ChEBI" id="CHEBI:37565"/>
        <dbReference type="ChEBI" id="CHEBI:43474"/>
        <dbReference type="ChEBI" id="CHEBI:57287"/>
        <dbReference type="ChEBI" id="CHEBI:57292"/>
        <dbReference type="ChEBI" id="CHEBI:58189"/>
    </reaction>
    <physiologicalReaction direction="right-to-left" evidence="1">
        <dbReference type="Rhea" id="RHEA:22122"/>
    </physiologicalReaction>
</comment>
<comment type="cofactor">
    <cofactor evidence="1">
        <name>Mg(2+)</name>
        <dbReference type="ChEBI" id="CHEBI:18420"/>
    </cofactor>
    <text evidence="1">Binds 1 Mg(2+) ion per subunit.</text>
</comment>
<comment type="pathway">
    <text evidence="1">Carbohydrate metabolism; tricarboxylic acid cycle; succinate from succinyl-CoA (ligase route): step 1/1.</text>
</comment>
<comment type="subunit">
    <text evidence="1">Heterotetramer of two alpha and two beta subunits.</text>
</comment>
<comment type="similarity">
    <text evidence="1">Belongs to the succinate/malate CoA ligase beta subunit family.</text>
</comment>
<accession>B8FLW6</accession>
<dbReference type="EC" id="6.2.1.5" evidence="1"/>
<dbReference type="EMBL" id="CP001322">
    <property type="protein sequence ID" value="ACL05470.1"/>
    <property type="molecule type" value="Genomic_DNA"/>
</dbReference>
<dbReference type="RefSeq" id="WP_015948521.1">
    <property type="nucleotide sequence ID" value="NC_011768.1"/>
</dbReference>
<dbReference type="SMR" id="B8FLW6"/>
<dbReference type="KEGG" id="dal:Dalk_3783"/>
<dbReference type="eggNOG" id="COG0045">
    <property type="taxonomic scope" value="Bacteria"/>
</dbReference>
<dbReference type="HOGENOM" id="CLU_037430_0_2_7"/>
<dbReference type="UniPathway" id="UPA00223">
    <property type="reaction ID" value="UER00999"/>
</dbReference>
<dbReference type="Proteomes" id="UP000000739">
    <property type="component" value="Chromosome"/>
</dbReference>
<dbReference type="GO" id="GO:0005829">
    <property type="term" value="C:cytosol"/>
    <property type="evidence" value="ECO:0007669"/>
    <property type="project" value="TreeGrafter"/>
</dbReference>
<dbReference type="GO" id="GO:0042709">
    <property type="term" value="C:succinate-CoA ligase complex"/>
    <property type="evidence" value="ECO:0007669"/>
    <property type="project" value="TreeGrafter"/>
</dbReference>
<dbReference type="GO" id="GO:0005524">
    <property type="term" value="F:ATP binding"/>
    <property type="evidence" value="ECO:0007669"/>
    <property type="project" value="UniProtKB-UniRule"/>
</dbReference>
<dbReference type="GO" id="GO:0000287">
    <property type="term" value="F:magnesium ion binding"/>
    <property type="evidence" value="ECO:0007669"/>
    <property type="project" value="UniProtKB-UniRule"/>
</dbReference>
<dbReference type="GO" id="GO:0004775">
    <property type="term" value="F:succinate-CoA ligase (ADP-forming) activity"/>
    <property type="evidence" value="ECO:0007669"/>
    <property type="project" value="UniProtKB-UniRule"/>
</dbReference>
<dbReference type="GO" id="GO:0004776">
    <property type="term" value="F:succinate-CoA ligase (GDP-forming) activity"/>
    <property type="evidence" value="ECO:0007669"/>
    <property type="project" value="RHEA"/>
</dbReference>
<dbReference type="GO" id="GO:0006104">
    <property type="term" value="P:succinyl-CoA metabolic process"/>
    <property type="evidence" value="ECO:0007669"/>
    <property type="project" value="TreeGrafter"/>
</dbReference>
<dbReference type="GO" id="GO:0006099">
    <property type="term" value="P:tricarboxylic acid cycle"/>
    <property type="evidence" value="ECO:0007669"/>
    <property type="project" value="UniProtKB-UniRule"/>
</dbReference>
<dbReference type="FunFam" id="3.30.1490.20:FF:000002">
    <property type="entry name" value="Succinate--CoA ligase [ADP-forming] subunit beta"/>
    <property type="match status" value="1"/>
</dbReference>
<dbReference type="FunFam" id="3.30.470.20:FF:000002">
    <property type="entry name" value="Succinate--CoA ligase [ADP-forming] subunit beta"/>
    <property type="match status" value="1"/>
</dbReference>
<dbReference type="FunFam" id="3.40.50.261:FF:000001">
    <property type="entry name" value="Succinate--CoA ligase [ADP-forming] subunit beta"/>
    <property type="match status" value="1"/>
</dbReference>
<dbReference type="Gene3D" id="3.30.1490.20">
    <property type="entry name" value="ATP-grasp fold, A domain"/>
    <property type="match status" value="1"/>
</dbReference>
<dbReference type="Gene3D" id="3.30.470.20">
    <property type="entry name" value="ATP-grasp fold, B domain"/>
    <property type="match status" value="1"/>
</dbReference>
<dbReference type="Gene3D" id="3.40.50.261">
    <property type="entry name" value="Succinyl-CoA synthetase domains"/>
    <property type="match status" value="1"/>
</dbReference>
<dbReference type="HAMAP" id="MF_00558">
    <property type="entry name" value="Succ_CoA_beta"/>
    <property type="match status" value="1"/>
</dbReference>
<dbReference type="InterPro" id="IPR011761">
    <property type="entry name" value="ATP-grasp"/>
</dbReference>
<dbReference type="InterPro" id="IPR013650">
    <property type="entry name" value="ATP-grasp_succ-CoA_synth-type"/>
</dbReference>
<dbReference type="InterPro" id="IPR013815">
    <property type="entry name" value="ATP_grasp_subdomain_1"/>
</dbReference>
<dbReference type="InterPro" id="IPR017866">
    <property type="entry name" value="Succ-CoA_synthase_bsu_CS"/>
</dbReference>
<dbReference type="InterPro" id="IPR005811">
    <property type="entry name" value="SUCC_ACL_C"/>
</dbReference>
<dbReference type="InterPro" id="IPR005809">
    <property type="entry name" value="Succ_CoA_ligase-like_bsu"/>
</dbReference>
<dbReference type="InterPro" id="IPR016102">
    <property type="entry name" value="Succinyl-CoA_synth-like"/>
</dbReference>
<dbReference type="NCBIfam" id="NF001913">
    <property type="entry name" value="PRK00696.1"/>
    <property type="match status" value="1"/>
</dbReference>
<dbReference type="NCBIfam" id="TIGR01016">
    <property type="entry name" value="sucCoAbeta"/>
    <property type="match status" value="1"/>
</dbReference>
<dbReference type="PANTHER" id="PTHR11815:SF10">
    <property type="entry name" value="SUCCINATE--COA LIGASE [GDP-FORMING] SUBUNIT BETA, MITOCHONDRIAL"/>
    <property type="match status" value="1"/>
</dbReference>
<dbReference type="PANTHER" id="PTHR11815">
    <property type="entry name" value="SUCCINYL-COA SYNTHETASE BETA CHAIN"/>
    <property type="match status" value="1"/>
</dbReference>
<dbReference type="Pfam" id="PF08442">
    <property type="entry name" value="ATP-grasp_2"/>
    <property type="match status" value="1"/>
</dbReference>
<dbReference type="Pfam" id="PF00549">
    <property type="entry name" value="Ligase_CoA"/>
    <property type="match status" value="1"/>
</dbReference>
<dbReference type="PIRSF" id="PIRSF001554">
    <property type="entry name" value="SucCS_beta"/>
    <property type="match status" value="1"/>
</dbReference>
<dbReference type="SUPFAM" id="SSF56059">
    <property type="entry name" value="Glutathione synthetase ATP-binding domain-like"/>
    <property type="match status" value="1"/>
</dbReference>
<dbReference type="SUPFAM" id="SSF52210">
    <property type="entry name" value="Succinyl-CoA synthetase domains"/>
    <property type="match status" value="1"/>
</dbReference>
<dbReference type="PROSITE" id="PS50975">
    <property type="entry name" value="ATP_GRASP"/>
    <property type="match status" value="1"/>
</dbReference>
<dbReference type="PROSITE" id="PS01217">
    <property type="entry name" value="SUCCINYL_COA_LIG_3"/>
    <property type="match status" value="1"/>
</dbReference>
<gene>
    <name evidence="1" type="primary">sucC</name>
    <name type="ordered locus">Dalk_3783</name>
</gene>
<organism>
    <name type="scientific">Desulfatibacillum aliphaticivorans</name>
    <dbReference type="NCBI Taxonomy" id="218208"/>
    <lineage>
        <taxon>Bacteria</taxon>
        <taxon>Pseudomonadati</taxon>
        <taxon>Thermodesulfobacteriota</taxon>
        <taxon>Desulfobacteria</taxon>
        <taxon>Desulfobacterales</taxon>
        <taxon>Desulfatibacillaceae</taxon>
        <taxon>Desulfatibacillum</taxon>
    </lineage>
</organism>
<proteinExistence type="inferred from homology"/>
<reference key="1">
    <citation type="journal article" date="2012" name="Environ. Microbiol.">
        <title>The genome sequence of Desulfatibacillum alkenivorans AK-01: a blueprint for anaerobic alkane oxidation.</title>
        <authorList>
            <person name="Callaghan A.V."/>
            <person name="Morris B.E."/>
            <person name="Pereira I.A."/>
            <person name="McInerney M.J."/>
            <person name="Austin R.N."/>
            <person name="Groves J.T."/>
            <person name="Kukor J.J."/>
            <person name="Suflita J.M."/>
            <person name="Young L.Y."/>
            <person name="Zylstra G.J."/>
            <person name="Wawrik B."/>
        </authorList>
    </citation>
    <scope>NUCLEOTIDE SEQUENCE [LARGE SCALE GENOMIC DNA]</scope>
    <source>
        <strain>AK-01</strain>
    </source>
</reference>
<feature type="chain" id="PRO_1000129180" description="Succinate--CoA ligase [ADP-forming] subunit beta">
    <location>
        <begin position="1"/>
        <end position="386"/>
    </location>
</feature>
<feature type="domain" description="ATP-grasp" evidence="1">
    <location>
        <begin position="9"/>
        <end position="244"/>
    </location>
</feature>
<feature type="binding site" evidence="1">
    <location>
        <position position="46"/>
    </location>
    <ligand>
        <name>ATP</name>
        <dbReference type="ChEBI" id="CHEBI:30616"/>
    </ligand>
</feature>
<feature type="binding site" evidence="1">
    <location>
        <begin position="53"/>
        <end position="55"/>
    </location>
    <ligand>
        <name>ATP</name>
        <dbReference type="ChEBI" id="CHEBI:30616"/>
    </ligand>
</feature>
<feature type="binding site" evidence="1">
    <location>
        <position position="99"/>
    </location>
    <ligand>
        <name>ATP</name>
        <dbReference type="ChEBI" id="CHEBI:30616"/>
    </ligand>
</feature>
<feature type="binding site" evidence="1">
    <location>
        <position position="102"/>
    </location>
    <ligand>
        <name>ATP</name>
        <dbReference type="ChEBI" id="CHEBI:30616"/>
    </ligand>
</feature>
<feature type="binding site" evidence="1">
    <location>
        <position position="107"/>
    </location>
    <ligand>
        <name>ATP</name>
        <dbReference type="ChEBI" id="CHEBI:30616"/>
    </ligand>
</feature>
<feature type="binding site" evidence="1">
    <location>
        <position position="199"/>
    </location>
    <ligand>
        <name>Mg(2+)</name>
        <dbReference type="ChEBI" id="CHEBI:18420"/>
    </ligand>
</feature>
<feature type="binding site" evidence="1">
    <location>
        <position position="213"/>
    </location>
    <ligand>
        <name>Mg(2+)</name>
        <dbReference type="ChEBI" id="CHEBI:18420"/>
    </ligand>
</feature>
<feature type="binding site" evidence="1">
    <location>
        <position position="264"/>
    </location>
    <ligand>
        <name>substrate</name>
        <note>ligand shared with subunit alpha</note>
    </ligand>
</feature>
<feature type="binding site" evidence="1">
    <location>
        <begin position="321"/>
        <end position="323"/>
    </location>
    <ligand>
        <name>substrate</name>
        <note>ligand shared with subunit alpha</note>
    </ligand>
</feature>
<name>SUCC_DESAL</name>
<protein>
    <recommendedName>
        <fullName evidence="1">Succinate--CoA ligase [ADP-forming] subunit beta</fullName>
        <ecNumber evidence="1">6.2.1.5</ecNumber>
    </recommendedName>
    <alternativeName>
        <fullName evidence="1">Succinyl-CoA synthetase subunit beta</fullName>
        <shortName evidence="1">SCS-beta</shortName>
    </alternativeName>
</protein>
<evidence type="ECO:0000255" key="1">
    <source>
        <dbReference type="HAMAP-Rule" id="MF_00558"/>
    </source>
</evidence>
<keyword id="KW-0067">ATP-binding</keyword>
<keyword id="KW-0436">Ligase</keyword>
<keyword id="KW-0460">Magnesium</keyword>
<keyword id="KW-0479">Metal-binding</keyword>
<keyword id="KW-0547">Nucleotide-binding</keyword>
<keyword id="KW-1185">Reference proteome</keyword>
<keyword id="KW-0816">Tricarboxylic acid cycle</keyword>
<sequence length="386" mass="41482">MKIHEYQAKELFANYGVPVPKGKPVFSVDEAVEAAKELGDFPVVVKAQIHAGGRGKGGGVKLAQNIDEVKTIAGEILGMQLVTHQTGPEGQKVQKLLVEQGLDIAKELYFSIIVDRATAKIVIMCSEAGGMDIEEVAASTPEKIIKVPVDPLLGVQGYHCRQAAYRLNLPPAAIKPFIKMVQGLYKMFMDTDCSLLEINPLVLTGDDGIIALDAKINFDDSALYRHKDIQEYRDLDEEEPLEVEASKFNLNYIKMDGNVGNMVNGAGLAMATMDIIKQAGAEPANFLDVGGGANAEQVENGFRIILSDKNVKGILINIFGGILRCDVLASGVVEAAKKVGLNVPVVVRMEGTNVEEGRRILAESGLNLTGAEDLKDAAAKVAQIVQ</sequence>